<organism>
    <name type="scientific">Homo sapiens</name>
    <name type="common">Human</name>
    <dbReference type="NCBI Taxonomy" id="9606"/>
    <lineage>
        <taxon>Eukaryota</taxon>
        <taxon>Metazoa</taxon>
        <taxon>Chordata</taxon>
        <taxon>Craniata</taxon>
        <taxon>Vertebrata</taxon>
        <taxon>Euteleostomi</taxon>
        <taxon>Mammalia</taxon>
        <taxon>Eutheria</taxon>
        <taxon>Euarchontoglires</taxon>
        <taxon>Primates</taxon>
        <taxon>Haplorrhini</taxon>
        <taxon>Catarrhini</taxon>
        <taxon>Hominidae</taxon>
        <taxon>Homo</taxon>
    </lineage>
</organism>
<sequence>MAQVSINNDYSEWDLSTDAGERARLLQSPCVDTAPKSEWEASPGGLDRGTTSTLGAIFIVVNACLGAGLLNFPAAFSTAGGVAAGIALQMGMLVFIISGLVILAYCSQASNERTYQEVVWAVCGKLTGVLCEVAIAVYTFGTCIAFLIIIGDQQDKIIAVMAKEPEGASGPWYTDRKFTISLTAFLFILPLSIPREIGFQKYASFLSVVGTWYVTAIVIIKYIWPDKEMTPGNILTRPASWMAVFNAMPTICFGFQCHVSSVPVFNSMQQPEVKTWGGVVTAAMVIALAVYMGTGICGFLTFGAAVDPDVLLSYPSEDMAVAVARAFIILSVLTSYPILHFCGRAVVEGLWLRYQGVPVEEDVGRERRRRVLQTLVWFLLTLLLALFIPDIGKVISVIGGLAACFIFVFPGLCLIQAKLSEMEEVKPASWWVLVSYGVLLVTLGAFIFGQTTANAIFVDLLA</sequence>
<dbReference type="EMBL" id="AK001677">
    <property type="protein sequence ID" value="BAA91830.1"/>
    <property type="molecule type" value="mRNA"/>
</dbReference>
<dbReference type="EMBL" id="AK022786">
    <property type="protein sequence ID" value="BAB14244.1"/>
    <property type="molecule type" value="mRNA"/>
</dbReference>
<dbReference type="EMBL" id="CR457236">
    <property type="protein sequence ID" value="CAG33517.1"/>
    <property type="molecule type" value="mRNA"/>
</dbReference>
<dbReference type="EMBL" id="AK222932">
    <property type="protein sequence ID" value="BAD96652.1"/>
    <property type="molecule type" value="mRNA"/>
</dbReference>
<dbReference type="EMBL" id="CH471092">
    <property type="protein sequence ID" value="EAW82985.1"/>
    <property type="molecule type" value="Genomic_DNA"/>
</dbReference>
<dbReference type="EMBL" id="BC001961">
    <property type="protein sequence ID" value="AAH01961.1"/>
    <property type="molecule type" value="mRNA"/>
</dbReference>
<dbReference type="CCDS" id="CCDS10800.1">
    <molecule id="Q9NVC3-1"/>
</dbReference>
<dbReference type="RefSeq" id="NP_001356537.1">
    <molecule id="Q9NVC3-1"/>
    <property type="nucleotide sequence ID" value="NM_001369608.1"/>
</dbReference>
<dbReference type="RefSeq" id="NP_001356538.1">
    <molecule id="Q9NVC3-1"/>
    <property type="nucleotide sequence ID" value="NM_001369609.1"/>
</dbReference>
<dbReference type="RefSeq" id="NP_001356540.1">
    <molecule id="Q9NVC3-1"/>
    <property type="nucleotide sequence ID" value="NM_001369611.1"/>
</dbReference>
<dbReference type="RefSeq" id="NP_060701.1">
    <molecule id="Q9NVC3-1"/>
    <property type="nucleotide sequence ID" value="NM_018231.3"/>
</dbReference>
<dbReference type="RefSeq" id="XP_016878882.1">
    <property type="nucleotide sequence ID" value="XM_017023393.1"/>
</dbReference>
<dbReference type="RefSeq" id="XP_016878886.1">
    <property type="nucleotide sequence ID" value="XM_017023397.1"/>
</dbReference>
<dbReference type="SMR" id="Q9NVC3"/>
<dbReference type="BioGRID" id="120531">
    <property type="interactions" value="87"/>
</dbReference>
<dbReference type="FunCoup" id="Q9NVC3">
    <property type="interactions" value="129"/>
</dbReference>
<dbReference type="IntAct" id="Q9NVC3">
    <property type="interactions" value="66"/>
</dbReference>
<dbReference type="MINT" id="Q9NVC3"/>
<dbReference type="STRING" id="9606.ENSP00000454646"/>
<dbReference type="TCDB" id="2.A.18.6.13">
    <property type="family name" value="the amino acid/auxin permease (aaap) family"/>
</dbReference>
<dbReference type="iPTMnet" id="Q9NVC3"/>
<dbReference type="PhosphoSitePlus" id="Q9NVC3"/>
<dbReference type="SwissPalm" id="Q9NVC3"/>
<dbReference type="BioMuta" id="SLC38A7"/>
<dbReference type="DMDM" id="74734488"/>
<dbReference type="jPOST" id="Q9NVC3"/>
<dbReference type="MassIVE" id="Q9NVC3"/>
<dbReference type="PaxDb" id="9606-ENSP00000454646"/>
<dbReference type="PeptideAtlas" id="Q9NVC3"/>
<dbReference type="ProteomicsDB" id="82775">
    <molecule id="Q9NVC3-1"/>
</dbReference>
<dbReference type="ProteomicsDB" id="82776">
    <molecule id="Q9NVC3-2"/>
</dbReference>
<dbReference type="Antibodypedia" id="48949">
    <property type="antibodies" value="36 antibodies from 11 providers"/>
</dbReference>
<dbReference type="DNASU" id="55238"/>
<dbReference type="Ensembl" id="ENST00000219320.9">
    <molecule id="Q9NVC3-1"/>
    <property type="protein sequence ID" value="ENSP00000219320.3"/>
    <property type="gene ID" value="ENSG00000103042.9"/>
</dbReference>
<dbReference type="Ensembl" id="ENST00000570101.5">
    <molecule id="Q9NVC3-1"/>
    <property type="protein sequence ID" value="ENSP00000454646.1"/>
    <property type="gene ID" value="ENSG00000103042.9"/>
</dbReference>
<dbReference type="GeneID" id="55238"/>
<dbReference type="KEGG" id="hsa:55238"/>
<dbReference type="MANE-Select" id="ENST00000219320.9">
    <property type="protein sequence ID" value="ENSP00000219320.3"/>
    <property type="RefSeq nucleotide sequence ID" value="NM_018231.3"/>
    <property type="RefSeq protein sequence ID" value="NP_060701.1"/>
</dbReference>
<dbReference type="UCSC" id="uc002eod.2">
    <molecule id="Q9NVC3-1"/>
    <property type="organism name" value="human"/>
</dbReference>
<dbReference type="AGR" id="HGNC:25582"/>
<dbReference type="CTD" id="55238"/>
<dbReference type="DisGeNET" id="55238"/>
<dbReference type="GeneCards" id="SLC38A7"/>
<dbReference type="HGNC" id="HGNC:25582">
    <property type="gene designation" value="SLC38A7"/>
</dbReference>
<dbReference type="HPA" id="ENSG00000103042">
    <property type="expression patterns" value="Tissue enhanced (testis)"/>
</dbReference>
<dbReference type="MIM" id="614236">
    <property type="type" value="gene"/>
</dbReference>
<dbReference type="neXtProt" id="NX_Q9NVC3"/>
<dbReference type="OpenTargets" id="ENSG00000103042"/>
<dbReference type="PharmGKB" id="PA162403772"/>
<dbReference type="VEuPathDB" id="HostDB:ENSG00000103042"/>
<dbReference type="eggNOG" id="KOG1305">
    <property type="taxonomic scope" value="Eukaryota"/>
</dbReference>
<dbReference type="GeneTree" id="ENSGT00940000158136"/>
<dbReference type="InParanoid" id="Q9NVC3"/>
<dbReference type="OMA" id="FAFTGHQ"/>
<dbReference type="OrthoDB" id="438545at2759"/>
<dbReference type="PAN-GO" id="Q9NVC3">
    <property type="GO annotations" value="10 GO annotations based on evolutionary models"/>
</dbReference>
<dbReference type="PhylomeDB" id="Q9NVC3"/>
<dbReference type="TreeFam" id="TF328787"/>
<dbReference type="PathwayCommons" id="Q9NVC3"/>
<dbReference type="SignaLink" id="Q9NVC3"/>
<dbReference type="BioGRID-ORCS" id="55238">
    <property type="hits" value="67 hits in 1160 CRISPR screens"/>
</dbReference>
<dbReference type="ChiTaRS" id="SLC38A7">
    <property type="organism name" value="human"/>
</dbReference>
<dbReference type="GenomeRNAi" id="55238"/>
<dbReference type="Pharos" id="Q9NVC3">
    <property type="development level" value="Tdark"/>
</dbReference>
<dbReference type="PRO" id="PR:Q9NVC3"/>
<dbReference type="Proteomes" id="UP000005640">
    <property type="component" value="Chromosome 16"/>
</dbReference>
<dbReference type="RNAct" id="Q9NVC3">
    <property type="molecule type" value="protein"/>
</dbReference>
<dbReference type="Bgee" id="ENSG00000103042">
    <property type="expression patterns" value="Expressed in sperm and 179 other cell types or tissues"/>
</dbReference>
<dbReference type="ExpressionAtlas" id="Q9NVC3">
    <property type="expression patterns" value="baseline and differential"/>
</dbReference>
<dbReference type="GO" id="GO:0030424">
    <property type="term" value="C:axon"/>
    <property type="evidence" value="ECO:0000250"/>
    <property type="project" value="UniProtKB"/>
</dbReference>
<dbReference type="GO" id="GO:0005765">
    <property type="term" value="C:lysosomal membrane"/>
    <property type="evidence" value="ECO:0000314"/>
    <property type="project" value="UniProtKB"/>
</dbReference>
<dbReference type="GO" id="GO:0016020">
    <property type="term" value="C:membrane"/>
    <property type="evidence" value="ECO:0000318"/>
    <property type="project" value="GO_Central"/>
</dbReference>
<dbReference type="GO" id="GO:0043025">
    <property type="term" value="C:neuronal cell body"/>
    <property type="evidence" value="ECO:0000250"/>
    <property type="project" value="UniProtKB"/>
</dbReference>
<dbReference type="GO" id="GO:0015182">
    <property type="term" value="F:L-asparagine transmembrane transporter activity"/>
    <property type="evidence" value="ECO:0000318"/>
    <property type="project" value="GO_Central"/>
</dbReference>
<dbReference type="GO" id="GO:0140901">
    <property type="term" value="F:L-asparagine:sodium symporter activity"/>
    <property type="evidence" value="ECO:0000314"/>
    <property type="project" value="UniProtKB"/>
</dbReference>
<dbReference type="GO" id="GO:0015186">
    <property type="term" value="F:L-glutamine transmembrane transporter activity"/>
    <property type="evidence" value="ECO:0000318"/>
    <property type="project" value="GO_Central"/>
</dbReference>
<dbReference type="GO" id="GO:0140902">
    <property type="term" value="F:L-glutamine:sodium symporter activity"/>
    <property type="evidence" value="ECO:0000314"/>
    <property type="project" value="UniProtKB"/>
</dbReference>
<dbReference type="GO" id="GO:0003333">
    <property type="term" value="P:amino acid transmembrane transport"/>
    <property type="evidence" value="ECO:0000318"/>
    <property type="project" value="GO_Central"/>
</dbReference>
<dbReference type="GO" id="GO:0006867">
    <property type="term" value="P:asparagine transport"/>
    <property type="evidence" value="ECO:0000314"/>
    <property type="project" value="UniProtKB"/>
</dbReference>
<dbReference type="GO" id="GO:0006868">
    <property type="term" value="P:glutamine transport"/>
    <property type="evidence" value="ECO:0000314"/>
    <property type="project" value="UniProtKB"/>
</dbReference>
<dbReference type="GO" id="GO:0006814">
    <property type="term" value="P:sodium ion transport"/>
    <property type="evidence" value="ECO:0000250"/>
    <property type="project" value="UniProtKB"/>
</dbReference>
<dbReference type="FunFam" id="1.20.1740.10:FF:000038">
    <property type="entry name" value="Putative sodium-coupled neutral amino acid transporter 7"/>
    <property type="match status" value="1"/>
</dbReference>
<dbReference type="Gene3D" id="1.20.1740.10">
    <property type="entry name" value="Amino acid/polyamine transporter I"/>
    <property type="match status" value="1"/>
</dbReference>
<dbReference type="InterPro" id="IPR013057">
    <property type="entry name" value="AA_transpt_TM"/>
</dbReference>
<dbReference type="PANTHER" id="PTHR22950">
    <property type="entry name" value="AMINO ACID TRANSPORTER"/>
    <property type="match status" value="1"/>
</dbReference>
<dbReference type="PANTHER" id="PTHR22950:SF192">
    <property type="entry name" value="SODIUM-COUPLED NEUTRAL AMINO ACID TRANSPORTER 7"/>
    <property type="match status" value="1"/>
</dbReference>
<dbReference type="Pfam" id="PF01490">
    <property type="entry name" value="Aa_trans"/>
    <property type="match status" value="1"/>
</dbReference>
<keyword id="KW-0025">Alternative splicing</keyword>
<keyword id="KW-0029">Amino-acid transport</keyword>
<keyword id="KW-0966">Cell projection</keyword>
<keyword id="KW-0406">Ion transport</keyword>
<keyword id="KW-0458">Lysosome</keyword>
<keyword id="KW-0472">Membrane</keyword>
<keyword id="KW-0597">Phosphoprotein</keyword>
<keyword id="KW-1267">Proteomics identification</keyword>
<keyword id="KW-1185">Reference proteome</keyword>
<keyword id="KW-0915">Sodium</keyword>
<keyword id="KW-0739">Sodium transport</keyword>
<keyword id="KW-0812">Transmembrane</keyword>
<keyword id="KW-1133">Transmembrane helix</keyword>
<keyword id="KW-0813">Transport</keyword>
<name>S38A7_HUMAN</name>
<comment type="function">
    <text evidence="3 4">Symporter that selectively cotransports sodium ions and amino acids, such as L-glutamine and L-asparagine from the lysosome into the cytoplasm and may participates in mTORC1 activation (PubMed:28416685, PubMed:35561222). The transport activity requires an acidic lysosomal lumen (PubMed:28416685).</text>
</comment>
<comment type="catalytic activity">
    <reaction evidence="3">
        <text>L-asparagine(in) + Na(+)(in) = L-asparagine(out) + Na(+)(out)</text>
        <dbReference type="Rhea" id="RHEA:71383"/>
        <dbReference type="ChEBI" id="CHEBI:29101"/>
        <dbReference type="ChEBI" id="CHEBI:58048"/>
    </reaction>
</comment>
<comment type="catalytic activity">
    <reaction evidence="3">
        <text>L-glutamine(in) + Na(+)(in) = L-glutamine(out) + Na(+)(out)</text>
        <dbReference type="Rhea" id="RHEA:68236"/>
        <dbReference type="ChEBI" id="CHEBI:29101"/>
        <dbReference type="ChEBI" id="CHEBI:58359"/>
    </reaction>
</comment>
<comment type="subunit">
    <text evidence="4">Interacts with the mTORC1 complex; this interaction mediates the recruitment of mTORC1 to the lysosome and its subsequent activation.</text>
</comment>
<comment type="interaction">
    <interactant intactId="EBI-10314552">
        <id>Q9NVC3</id>
    </interactant>
    <interactant intactId="EBI-10961679">
        <id>Q5T8D3-2</id>
        <label>ACBD5</label>
    </interactant>
    <organismsDiffer>false</organismsDiffer>
    <experiments>3</experiments>
</comment>
<comment type="interaction">
    <interactant intactId="EBI-10314552">
        <id>Q9NVC3</id>
    </interactant>
    <interactant intactId="EBI-19125216">
        <id>Q86WK6</id>
        <label>AMIGO1</label>
    </interactant>
    <organismsDiffer>false</organismsDiffer>
    <experiments>3</experiments>
</comment>
<comment type="interaction">
    <interactant intactId="EBI-10314552">
        <id>Q9NVC3</id>
    </interactant>
    <interactant intactId="EBI-2606935">
        <id>Q96BI3</id>
        <label>APH1A</label>
    </interactant>
    <organismsDiffer>false</organismsDiffer>
    <experiments>3</experiments>
</comment>
<comment type="interaction">
    <interactant intactId="EBI-10314552">
        <id>Q9NVC3</id>
    </interactant>
    <interactant intactId="EBI-12701138">
        <id>P41181</id>
        <label>AQP2</label>
    </interactant>
    <organismsDiffer>false</organismsDiffer>
    <experiments>3</experiments>
</comment>
<comment type="interaction">
    <interactant intactId="EBI-10314552">
        <id>Q9NVC3</id>
    </interactant>
    <interactant intactId="EBI-17444777">
        <id>O43315</id>
        <label>AQP9</label>
    </interactant>
    <organismsDiffer>false</organismsDiffer>
    <experiments>3</experiments>
</comment>
<comment type="interaction">
    <interactant intactId="EBI-10314552">
        <id>Q9NVC3</id>
    </interactant>
    <interactant intactId="EBI-11343438">
        <id>Q3SXY8</id>
        <label>ARL13B</label>
    </interactant>
    <organismsDiffer>false</organismsDiffer>
    <experiments>3</experiments>
</comment>
<comment type="interaction">
    <interactant intactId="EBI-10314552">
        <id>Q9NVC3</id>
    </interactant>
    <interactant intactId="EBI-17953245">
        <id>Q6UXG8-3</id>
        <label>BTNL9</label>
    </interactant>
    <organismsDiffer>false</organismsDiffer>
    <experiments>3</experiments>
</comment>
<comment type="interaction">
    <interactant intactId="EBI-10314552">
        <id>Q9NVC3</id>
    </interactant>
    <interactant intactId="EBI-4402346">
        <id>P51798</id>
        <label>CLCN7</label>
    </interactant>
    <organismsDiffer>false</organismsDiffer>
    <experiments>3</experiments>
</comment>
<comment type="interaction">
    <interactant intactId="EBI-10314552">
        <id>Q9NVC3</id>
    </interactant>
    <interactant intactId="EBI-740744">
        <id>O95471</id>
        <label>CLDN7</label>
    </interactant>
    <organismsDiffer>false</organismsDiffer>
    <experiments>3</experiments>
</comment>
<comment type="interaction">
    <interactant intactId="EBI-10314552">
        <id>Q9NVC3</id>
    </interactant>
    <interactant intactId="EBI-2873246">
        <id>Q8IUN9</id>
        <label>CLEC10A</label>
    </interactant>
    <organismsDiffer>false</organismsDiffer>
    <experiments>3</experiments>
</comment>
<comment type="interaction">
    <interactant intactId="EBI-10314552">
        <id>Q9NVC3</id>
    </interactant>
    <interactant intactId="EBI-18013275">
        <id>Q7Z7G2</id>
        <label>CPLX4</label>
    </interactant>
    <organismsDiffer>false</organismsDiffer>
    <experiments>3</experiments>
</comment>
<comment type="interaction">
    <interactant intactId="EBI-10314552">
        <id>Q9NVC3</id>
    </interactant>
    <interactant intactId="EBI-852194">
        <id>Q68CJ9</id>
        <label>CREB3L3</label>
    </interactant>
    <organismsDiffer>false</organismsDiffer>
    <experiments>3</experiments>
</comment>
<comment type="interaction">
    <interactant intactId="EBI-10314552">
        <id>Q9NVC3</id>
    </interactant>
    <interactant intactId="EBI-8646596">
        <id>P49447</id>
        <label>CYB561</label>
    </interactant>
    <organismsDiffer>false</organismsDiffer>
    <experiments>3</experiments>
</comment>
<comment type="interaction">
    <interactant intactId="EBI-10314552">
        <id>Q9NVC3</id>
    </interactant>
    <interactant intactId="EBI-1046040">
        <id>P00387</id>
        <label>CYB5R3</label>
    </interactant>
    <organismsDiffer>false</organismsDiffer>
    <experiments>3</experiments>
</comment>
<comment type="interaction">
    <interactant intactId="EBI-10314552">
        <id>Q9NVC3</id>
    </interactant>
    <interactant intactId="EBI-3915253">
        <id>Q15125</id>
        <label>EBP</label>
    </interactant>
    <organismsDiffer>false</organismsDiffer>
    <experiments>3</experiments>
</comment>
<comment type="interaction">
    <interactant intactId="EBI-10314552">
        <id>Q9NVC3</id>
    </interactant>
    <interactant intactId="EBI-529425">
        <id>Q92838</id>
        <label>EDA</label>
    </interactant>
    <organismsDiffer>false</organismsDiffer>
    <experiments>3</experiments>
</comment>
<comment type="interaction">
    <interactant intactId="EBI-10314552">
        <id>Q9NVC3</id>
    </interactant>
    <interactant intactId="EBI-781551">
        <id>Q9Y282</id>
        <label>ERGIC3</label>
    </interactant>
    <organismsDiffer>false</organismsDiffer>
    <experiments>3</experiments>
</comment>
<comment type="interaction">
    <interactant intactId="EBI-10314552">
        <id>Q9NVC3</id>
    </interactant>
    <interactant intactId="EBI-946830">
        <id>P30040</id>
        <label>ERP29</label>
    </interactant>
    <organismsDiffer>false</organismsDiffer>
    <experiments>3</experiments>
</comment>
<comment type="interaction">
    <interactant intactId="EBI-10314552">
        <id>Q9NVC3</id>
    </interactant>
    <interactant intactId="EBI-17640610">
        <id>P34910-2</id>
        <label>EVI2B</label>
    </interactant>
    <organismsDiffer>false</organismsDiffer>
    <experiments>3</experiments>
</comment>
<comment type="interaction">
    <interactant intactId="EBI-10314552">
        <id>Q9NVC3</id>
    </interactant>
    <interactant intactId="EBI-18304435">
        <id>Q5JX71</id>
        <label>FAM209A</label>
    </interactant>
    <organismsDiffer>false</organismsDiffer>
    <experiments>3</experiments>
</comment>
<comment type="interaction">
    <interactant intactId="EBI-10314552">
        <id>Q9NVC3</id>
    </interactant>
    <interactant intactId="EBI-3918971">
        <id>Q9Y680</id>
        <label>FKBP7</label>
    </interactant>
    <organismsDiffer>false</organismsDiffer>
    <experiments>3</experiments>
</comment>
<comment type="interaction">
    <interactant intactId="EBI-10314552">
        <id>Q9NVC3</id>
    </interactant>
    <interactant intactId="EBI-17458373">
        <id>P48165</id>
        <label>GJA8</label>
    </interactant>
    <organismsDiffer>false</organismsDiffer>
    <experiments>3</experiments>
</comment>
<comment type="interaction">
    <interactant intactId="EBI-10314552">
        <id>Q9NVC3</id>
    </interactant>
    <interactant intactId="EBI-3909454">
        <id>O95377</id>
        <label>GJB5</label>
    </interactant>
    <organismsDiffer>false</organismsDiffer>
    <experiments>3</experiments>
</comment>
<comment type="interaction">
    <interactant intactId="EBI-10314552">
        <id>Q9NVC3</id>
    </interactant>
    <interactant intactId="EBI-13345167">
        <id>Q8TDT2</id>
        <label>GPR152</label>
    </interactant>
    <organismsDiffer>false</organismsDiffer>
    <experiments>3</experiments>
</comment>
<comment type="interaction">
    <interactant intactId="EBI-10314552">
        <id>Q9NVC3</id>
    </interactant>
    <interactant intactId="EBI-18076404">
        <id>O15529</id>
        <label>GPR42</label>
    </interactant>
    <organismsDiffer>false</organismsDiffer>
    <experiments>3</experiments>
</comment>
<comment type="interaction">
    <interactant intactId="EBI-10314552">
        <id>Q9NVC3</id>
    </interactant>
    <interactant intactId="EBI-2867874">
        <id>Q9UM44</id>
        <label>HHLA2</label>
    </interactant>
    <organismsDiffer>false</organismsDiffer>
    <experiments>3</experiments>
</comment>
<comment type="interaction">
    <interactant intactId="EBI-10314552">
        <id>Q9NVC3</id>
    </interactant>
    <interactant intactId="EBI-1031656">
        <id>Q13651</id>
        <label>IL10RA</label>
    </interactant>
    <organismsDiffer>false</organismsDiffer>
    <experiments>3</experiments>
</comment>
<comment type="interaction">
    <interactant intactId="EBI-10314552">
        <id>Q9NVC3</id>
    </interactant>
    <interactant intactId="EBI-8632435">
        <id>P43628</id>
        <label>KIR2DL3</label>
    </interactant>
    <organismsDiffer>false</organismsDiffer>
    <experiments>3</experiments>
</comment>
<comment type="interaction">
    <interactant intactId="EBI-10314552">
        <id>Q9NVC3</id>
    </interactant>
    <interactant intactId="EBI-9088345">
        <id>O95867</id>
        <label>LY6G6C</label>
    </interactant>
    <organismsDiffer>false</organismsDiffer>
    <experiments>3</experiments>
</comment>
<comment type="interaction">
    <interactant intactId="EBI-10314552">
        <id>Q9NVC3</id>
    </interactant>
    <interactant intactId="EBI-10329546">
        <id>Q9Y5Y7</id>
        <label>LYVE1</label>
    </interactant>
    <organismsDiffer>false</organismsDiffer>
    <experiments>3</experiments>
</comment>
<comment type="interaction">
    <interactant intactId="EBI-10314552">
        <id>Q9NVC3</id>
    </interactant>
    <interactant intactId="EBI-6163737">
        <id>Q8N4V1</id>
        <label>MMGT1</label>
    </interactant>
    <organismsDiffer>false</organismsDiffer>
    <experiments>3</experiments>
</comment>
<comment type="interaction">
    <interactant intactId="EBI-10314552">
        <id>Q9NVC3</id>
    </interactant>
    <interactant intactId="EBI-17263240">
        <id>P15941-11</id>
        <label>MUC1</label>
    </interactant>
    <organismsDiffer>false</organismsDiffer>
    <experiments>3</experiments>
</comment>
<comment type="interaction">
    <interactant intactId="EBI-10314552">
        <id>Q9NVC3</id>
    </interactant>
    <interactant intactId="EBI-12382569">
        <id>Q2M2E3</id>
        <label>ODF4</label>
    </interactant>
    <organismsDiffer>false</organismsDiffer>
    <experiments>3</experiments>
</comment>
<comment type="interaction">
    <interactant intactId="EBI-10314552">
        <id>Q9NVC3</id>
    </interactant>
    <interactant intactId="EBI-12807478">
        <id>P35372-10</id>
        <label>OPRM1</label>
    </interactant>
    <organismsDiffer>false</organismsDiffer>
    <experiments>3</experiments>
</comment>
<comment type="interaction">
    <interactant intactId="EBI-10314552">
        <id>Q9NVC3</id>
    </interactant>
    <interactant intactId="EBI-7037612">
        <id>Q96RD7</id>
        <label>PANX1</label>
    </interactant>
    <organismsDiffer>false</organismsDiffer>
    <experiments>3</experiments>
</comment>
<comment type="interaction">
    <interactant intactId="EBI-10314552">
        <id>Q9NVC3</id>
    </interactant>
    <interactant intactId="EBI-16427978">
        <id>Q9BQ51</id>
        <label>PDCD1LG2</label>
    </interactant>
    <organismsDiffer>false</organismsDiffer>
    <experiments>3</experiments>
</comment>
<comment type="interaction">
    <interactant intactId="EBI-10314552">
        <id>Q9NVC3</id>
    </interactant>
    <interactant intactId="EBI-348482">
        <id>Q99942</id>
        <label>RNF5</label>
    </interactant>
    <organismsDiffer>false</organismsDiffer>
    <experiments>8</experiments>
</comment>
<comment type="interaction">
    <interactant intactId="EBI-10314552">
        <id>Q9NVC3</id>
    </interactant>
    <interactant intactId="EBI-3920694">
        <id>Q9NR31</id>
        <label>SAR1A</label>
    </interactant>
    <organismsDiffer>false</organismsDiffer>
    <experiments>3</experiments>
</comment>
<comment type="interaction">
    <interactant intactId="EBI-10314552">
        <id>Q9NVC3</id>
    </interactant>
    <interactant intactId="EBI-17247926">
        <id>Q9NY72</id>
        <label>SCN3B</label>
    </interactant>
    <organismsDiffer>false</organismsDiffer>
    <experiments>3</experiments>
</comment>
<comment type="interaction">
    <interactant intactId="EBI-10314552">
        <id>Q9NVC3</id>
    </interactant>
    <interactant intactId="EBI-749270">
        <id>Q8N6R1</id>
        <label>SERP2</label>
    </interactant>
    <organismsDiffer>false</organismsDiffer>
    <experiments>3</experiments>
</comment>
<comment type="interaction">
    <interactant intactId="EBI-10314552">
        <id>Q9NVC3</id>
    </interactant>
    <interactant intactId="EBI-18037857">
        <id>Q3SXP7</id>
        <label>SHISAL1</label>
    </interactant>
    <organismsDiffer>false</organismsDiffer>
    <experiments>3</experiments>
</comment>
<comment type="interaction">
    <interactant intactId="EBI-10314552">
        <id>Q9NVC3</id>
    </interactant>
    <interactant intactId="EBI-3923031">
        <id>Q14973</id>
        <label>SLC10A1</label>
    </interactant>
    <organismsDiffer>false</organismsDiffer>
    <experiments>3</experiments>
</comment>
<comment type="interaction">
    <interactant intactId="EBI-10314552">
        <id>Q9NVC3</id>
    </interactant>
    <interactant intactId="EBI-17595455">
        <id>P54219-3</id>
        <label>SLC18A1</label>
    </interactant>
    <organismsDiffer>false</organismsDiffer>
    <experiments>3</experiments>
</comment>
<comment type="interaction">
    <interactant intactId="EBI-10314552">
        <id>Q9NVC3</id>
    </interactant>
    <interactant intactId="EBI-8644112">
        <id>Q9BRI3</id>
        <label>SLC30A2</label>
    </interactant>
    <organismsDiffer>false</organismsDiffer>
    <experiments>3</experiments>
</comment>
<comment type="interaction">
    <interactant intactId="EBI-10314552">
        <id>Q9NVC3</id>
    </interactant>
    <interactant intactId="EBI-11343466">
        <id>Q9H2J7</id>
        <label>SLC6A15</label>
    </interactant>
    <organismsDiffer>false</organismsDiffer>
    <experiments>3</experiments>
</comment>
<comment type="interaction">
    <interactant intactId="EBI-10314552">
        <id>Q9NVC3</id>
    </interactant>
    <interactant intactId="EBI-12078338">
        <id>O43278-2</id>
        <label>SPINT1</label>
    </interactant>
    <organismsDiffer>false</organismsDiffer>
    <experiments>3</experiments>
</comment>
<comment type="interaction">
    <interactant intactId="EBI-10314552">
        <id>Q9NVC3</id>
    </interactant>
    <interactant intactId="EBI-17280858">
        <id>Q8WWF3</id>
        <label>SSMEM1</label>
    </interactant>
    <organismsDiffer>false</organismsDiffer>
    <experiments>3</experiments>
</comment>
<comment type="interaction">
    <interactant intactId="EBI-10314552">
        <id>Q9NVC3</id>
    </interactant>
    <interactant intactId="EBI-18196631">
        <id>Q5VXT5-2</id>
        <label>SYPL2</label>
    </interactant>
    <organismsDiffer>false</organismsDiffer>
    <experiments>3</experiments>
</comment>
<comment type="interaction">
    <interactant intactId="EBI-10314552">
        <id>Q9NVC3</id>
    </interactant>
    <interactant intactId="EBI-10982110">
        <id>Q96Q45-2</id>
        <label>TMEM237</label>
    </interactant>
    <organismsDiffer>false</organismsDiffer>
    <experiments>5</experiments>
</comment>
<comment type="interaction">
    <interactant intactId="EBI-10314552">
        <id>Q9NVC3</id>
    </interactant>
    <interactant intactId="EBI-18178701">
        <id>Q4KMG9</id>
        <label>TMEM52B</label>
    </interactant>
    <organismsDiffer>false</organismsDiffer>
    <experiments>3</experiments>
</comment>
<comment type="interaction">
    <interactant intactId="EBI-10314552">
        <id>Q9NVC3</id>
    </interactant>
    <interactant intactId="EBI-12345267">
        <id>O15393-2</id>
        <label>TMPRSS2</label>
    </interactant>
    <organismsDiffer>false</organismsDiffer>
    <experiments>3</experiments>
</comment>
<comment type="interaction">
    <interactant intactId="EBI-10314552">
        <id>Q9NVC3</id>
    </interactant>
    <interactant intactId="EBI-4289938">
        <id>P19075</id>
        <label>TSPAN8</label>
    </interactant>
    <organismsDiffer>false</organismsDiffer>
    <experiments>3</experiments>
</comment>
<comment type="interaction">
    <interactant intactId="EBI-10314552">
        <id>Q9NVC3</id>
    </interactant>
    <interactant intactId="EBI-751210">
        <id>Q96EC8</id>
        <label>YIPF6</label>
    </interactant>
    <organismsDiffer>false</organismsDiffer>
    <experiments>3</experiments>
</comment>
<comment type="subcellular location">
    <subcellularLocation>
        <location evidence="3 4">Lysosome membrane</location>
        <topology evidence="2">Multi-pass membrane protein</topology>
    </subcellularLocation>
    <subcellularLocation>
        <location evidence="1">Cell projection</location>
        <location evidence="1">Axon</location>
    </subcellularLocation>
    <text evidence="1">In neurons, located in soma.</text>
</comment>
<comment type="alternative products">
    <event type="alternative splicing"/>
    <isoform>
        <id>Q9NVC3-1</id>
        <name>1</name>
        <sequence type="displayed"/>
    </isoform>
    <isoform>
        <id>Q9NVC3-2</id>
        <name>2</name>
        <sequence type="described" ref="VSP_031511"/>
    </isoform>
</comment>
<comment type="similarity">
    <text evidence="6">Belongs to the amino acid/polyamine transporter 2 family.</text>
</comment>
<protein>
    <recommendedName>
        <fullName evidence="6">Sodium-coupled neutral amino acid transporter 7</fullName>
    </recommendedName>
    <alternativeName>
        <fullName>Solute carrier family 38 member 7</fullName>
    </alternativeName>
</protein>
<proteinExistence type="evidence at protein level"/>
<gene>
    <name evidence="7" type="primary">SLC38A7</name>
    <name type="synonym">SNAT7</name>
</gene>
<reference key="1">
    <citation type="journal article" date="2004" name="Nat. Genet.">
        <title>Complete sequencing and characterization of 21,243 full-length human cDNAs.</title>
        <authorList>
            <person name="Ota T."/>
            <person name="Suzuki Y."/>
            <person name="Nishikawa T."/>
            <person name="Otsuki T."/>
            <person name="Sugiyama T."/>
            <person name="Irie R."/>
            <person name="Wakamatsu A."/>
            <person name="Hayashi K."/>
            <person name="Sato H."/>
            <person name="Nagai K."/>
            <person name="Kimura K."/>
            <person name="Makita H."/>
            <person name="Sekine M."/>
            <person name="Obayashi M."/>
            <person name="Nishi T."/>
            <person name="Shibahara T."/>
            <person name="Tanaka T."/>
            <person name="Ishii S."/>
            <person name="Yamamoto J."/>
            <person name="Saito K."/>
            <person name="Kawai Y."/>
            <person name="Isono Y."/>
            <person name="Nakamura Y."/>
            <person name="Nagahari K."/>
            <person name="Murakami K."/>
            <person name="Yasuda T."/>
            <person name="Iwayanagi T."/>
            <person name="Wagatsuma M."/>
            <person name="Shiratori A."/>
            <person name="Sudo H."/>
            <person name="Hosoiri T."/>
            <person name="Kaku Y."/>
            <person name="Kodaira H."/>
            <person name="Kondo H."/>
            <person name="Sugawara M."/>
            <person name="Takahashi M."/>
            <person name="Kanda K."/>
            <person name="Yokoi T."/>
            <person name="Furuya T."/>
            <person name="Kikkawa E."/>
            <person name="Omura Y."/>
            <person name="Abe K."/>
            <person name="Kamihara K."/>
            <person name="Katsuta N."/>
            <person name="Sato K."/>
            <person name="Tanikawa M."/>
            <person name="Yamazaki M."/>
            <person name="Ninomiya K."/>
            <person name="Ishibashi T."/>
            <person name="Yamashita H."/>
            <person name="Murakawa K."/>
            <person name="Fujimori K."/>
            <person name="Tanai H."/>
            <person name="Kimata M."/>
            <person name="Watanabe M."/>
            <person name="Hiraoka S."/>
            <person name="Chiba Y."/>
            <person name="Ishida S."/>
            <person name="Ono Y."/>
            <person name="Takiguchi S."/>
            <person name="Watanabe S."/>
            <person name="Yosida M."/>
            <person name="Hotuta T."/>
            <person name="Kusano J."/>
            <person name="Kanehori K."/>
            <person name="Takahashi-Fujii A."/>
            <person name="Hara H."/>
            <person name="Tanase T.-O."/>
            <person name="Nomura Y."/>
            <person name="Togiya S."/>
            <person name="Komai F."/>
            <person name="Hara R."/>
            <person name="Takeuchi K."/>
            <person name="Arita M."/>
            <person name="Imose N."/>
            <person name="Musashino K."/>
            <person name="Yuuki H."/>
            <person name="Oshima A."/>
            <person name="Sasaki N."/>
            <person name="Aotsuka S."/>
            <person name="Yoshikawa Y."/>
            <person name="Matsunawa H."/>
            <person name="Ichihara T."/>
            <person name="Shiohata N."/>
            <person name="Sano S."/>
            <person name="Moriya S."/>
            <person name="Momiyama H."/>
            <person name="Satoh N."/>
            <person name="Takami S."/>
            <person name="Terashima Y."/>
            <person name="Suzuki O."/>
            <person name="Nakagawa S."/>
            <person name="Senoh A."/>
            <person name="Mizoguchi H."/>
            <person name="Goto Y."/>
            <person name="Shimizu F."/>
            <person name="Wakebe H."/>
            <person name="Hishigaki H."/>
            <person name="Watanabe T."/>
            <person name="Sugiyama A."/>
            <person name="Takemoto M."/>
            <person name="Kawakami B."/>
            <person name="Yamazaki M."/>
            <person name="Watanabe K."/>
            <person name="Kumagai A."/>
            <person name="Itakura S."/>
            <person name="Fukuzumi Y."/>
            <person name="Fujimori Y."/>
            <person name="Komiyama M."/>
            <person name="Tashiro H."/>
            <person name="Tanigami A."/>
            <person name="Fujiwara T."/>
            <person name="Ono T."/>
            <person name="Yamada K."/>
            <person name="Fujii Y."/>
            <person name="Ozaki K."/>
            <person name="Hirao M."/>
            <person name="Ohmori Y."/>
            <person name="Kawabata A."/>
            <person name="Hikiji T."/>
            <person name="Kobatake N."/>
            <person name="Inagaki H."/>
            <person name="Ikema Y."/>
            <person name="Okamoto S."/>
            <person name="Okitani R."/>
            <person name="Kawakami T."/>
            <person name="Noguchi S."/>
            <person name="Itoh T."/>
            <person name="Shigeta K."/>
            <person name="Senba T."/>
            <person name="Matsumura K."/>
            <person name="Nakajima Y."/>
            <person name="Mizuno T."/>
            <person name="Morinaga M."/>
            <person name="Sasaki M."/>
            <person name="Togashi T."/>
            <person name="Oyama M."/>
            <person name="Hata H."/>
            <person name="Watanabe M."/>
            <person name="Komatsu T."/>
            <person name="Mizushima-Sugano J."/>
            <person name="Satoh T."/>
            <person name="Shirai Y."/>
            <person name="Takahashi Y."/>
            <person name="Nakagawa K."/>
            <person name="Okumura K."/>
            <person name="Nagase T."/>
            <person name="Nomura N."/>
            <person name="Kikuchi H."/>
            <person name="Masuho Y."/>
            <person name="Yamashita R."/>
            <person name="Nakai K."/>
            <person name="Yada T."/>
            <person name="Nakamura Y."/>
            <person name="Ohara O."/>
            <person name="Isogai T."/>
            <person name="Sugano S."/>
        </authorList>
    </citation>
    <scope>NUCLEOTIDE SEQUENCE [LARGE SCALE MRNA] (ISOFORMS 1 AND 2)</scope>
    <source>
        <tissue>Teratocarcinoma</tissue>
    </source>
</reference>
<reference key="2">
    <citation type="submission" date="2004-06" db="EMBL/GenBank/DDBJ databases">
        <title>Cloning of human full open reading frames in Gateway(TM) system entry vector (pDONR201).</title>
        <authorList>
            <person name="Ebert L."/>
            <person name="Schick M."/>
            <person name="Neubert P."/>
            <person name="Schatten R."/>
            <person name="Henze S."/>
            <person name="Korn B."/>
        </authorList>
    </citation>
    <scope>NUCLEOTIDE SEQUENCE [LARGE SCALE MRNA] (ISOFORM 1)</scope>
</reference>
<reference key="3">
    <citation type="submission" date="2005-04" db="EMBL/GenBank/DDBJ databases">
        <authorList>
            <person name="Suzuki Y."/>
            <person name="Sugano S."/>
            <person name="Totoki Y."/>
            <person name="Toyoda A."/>
            <person name="Takeda T."/>
            <person name="Sakaki Y."/>
            <person name="Tanaka A."/>
            <person name="Yokoyama S."/>
        </authorList>
    </citation>
    <scope>NUCLEOTIDE SEQUENCE [LARGE SCALE MRNA] (ISOFORM 1)</scope>
    <source>
        <tissue>Kidney</tissue>
    </source>
</reference>
<reference key="4">
    <citation type="submission" date="2005-07" db="EMBL/GenBank/DDBJ databases">
        <authorList>
            <person name="Mural R.J."/>
            <person name="Istrail S."/>
            <person name="Sutton G.G."/>
            <person name="Florea L."/>
            <person name="Halpern A.L."/>
            <person name="Mobarry C.M."/>
            <person name="Lippert R."/>
            <person name="Walenz B."/>
            <person name="Shatkay H."/>
            <person name="Dew I."/>
            <person name="Miller J.R."/>
            <person name="Flanigan M.J."/>
            <person name="Edwards N.J."/>
            <person name="Bolanos R."/>
            <person name="Fasulo D."/>
            <person name="Halldorsson B.V."/>
            <person name="Hannenhalli S."/>
            <person name="Turner R."/>
            <person name="Yooseph S."/>
            <person name="Lu F."/>
            <person name="Nusskern D.R."/>
            <person name="Shue B.C."/>
            <person name="Zheng X.H."/>
            <person name="Zhong F."/>
            <person name="Delcher A.L."/>
            <person name="Huson D.H."/>
            <person name="Kravitz S.A."/>
            <person name="Mouchard L."/>
            <person name="Reinert K."/>
            <person name="Remington K.A."/>
            <person name="Clark A.G."/>
            <person name="Waterman M.S."/>
            <person name="Eichler E.E."/>
            <person name="Adams M.D."/>
            <person name="Hunkapiller M.W."/>
            <person name="Myers E.W."/>
            <person name="Venter J.C."/>
        </authorList>
    </citation>
    <scope>NUCLEOTIDE SEQUENCE [LARGE SCALE GENOMIC DNA]</scope>
</reference>
<reference key="5">
    <citation type="journal article" date="2004" name="Genome Res.">
        <title>The status, quality, and expansion of the NIH full-length cDNA project: the Mammalian Gene Collection (MGC).</title>
        <authorList>
            <consortium name="The MGC Project Team"/>
        </authorList>
    </citation>
    <scope>NUCLEOTIDE SEQUENCE [LARGE SCALE MRNA] (ISOFORM 1)</scope>
    <source>
        <tissue>Brain</tissue>
    </source>
</reference>
<reference key="6">
    <citation type="journal article" date="2013" name="J. Proteome Res.">
        <title>Toward a comprehensive characterization of a human cancer cell phosphoproteome.</title>
        <authorList>
            <person name="Zhou H."/>
            <person name="Di Palma S."/>
            <person name="Preisinger C."/>
            <person name="Peng M."/>
            <person name="Polat A.N."/>
            <person name="Heck A.J."/>
            <person name="Mohammed S."/>
        </authorList>
    </citation>
    <scope>PHOSPHORYLATION [LARGE SCALE ANALYSIS] AT SER-28</scope>
    <scope>IDENTIFICATION BY MASS SPECTROMETRY [LARGE SCALE ANALYSIS]</scope>
    <source>
        <tissue>Cervix carcinoma</tissue>
        <tissue>Erythroleukemia</tissue>
    </source>
</reference>
<reference key="7">
    <citation type="journal article" date="2017" name="Proc. Natl. Acad. Sci. U.S.A.">
        <title>SNAT7 is the primary lysosomal glutamine exporter required for extracellular protein-dependent growth of cancer cells.</title>
        <authorList>
            <person name="Verdon Q."/>
            <person name="Boonen M."/>
            <person name="Ribes C."/>
            <person name="Jadot M."/>
            <person name="Gasnier B."/>
            <person name="Sagne C."/>
        </authorList>
    </citation>
    <scope>FUNCTION</scope>
    <scope>TRANSPORTER ACTIVITY</scope>
    <scope>SUBCELLULAR LOCATION</scope>
</reference>
<reference key="8">
    <citation type="journal article" date="2022" name="Proc. Natl. Acad. Sci. U.S.A.">
        <title>SNAT7 regulates mTORC1 via macropinocytosis.</title>
        <authorList>
            <person name="Meng D."/>
            <person name="Yang Q."/>
            <person name="Jeong M.H."/>
            <person name="Curukovic A."/>
            <person name="Tiwary S."/>
            <person name="Melick C.H."/>
            <person name="Lama-Sherpa T.D."/>
            <person name="Wang H."/>
            <person name="Huerta-Rosario M."/>
            <person name="Urquhart G."/>
            <person name="Zacharias L.G."/>
            <person name="Lewis C."/>
            <person name="DeBerardinis R.J."/>
            <person name="Jewell J.L."/>
        </authorList>
    </citation>
    <scope>SUBCELLULAR LOCATION</scope>
    <scope>INTERACTION WITH MTORC1 COMPLEX</scope>
    <scope>FUNCTION</scope>
</reference>
<feature type="chain" id="PRO_0000319597" description="Sodium-coupled neutral amino acid transporter 7">
    <location>
        <begin position="1"/>
        <end position="462"/>
    </location>
</feature>
<feature type="transmembrane region" description="Helical" evidence="2">
    <location>
        <begin position="56"/>
        <end position="76"/>
    </location>
</feature>
<feature type="transmembrane region" description="Helical" evidence="2">
    <location>
        <begin position="82"/>
        <end position="102"/>
    </location>
</feature>
<feature type="transmembrane region" description="Helical" evidence="2">
    <location>
        <begin position="130"/>
        <end position="150"/>
    </location>
</feature>
<feature type="transmembrane region" description="Helical" evidence="2">
    <location>
        <begin position="178"/>
        <end position="198"/>
    </location>
</feature>
<feature type="transmembrane region" description="Helical" evidence="2">
    <location>
        <begin position="205"/>
        <end position="225"/>
    </location>
</feature>
<feature type="transmembrane region" description="Helical" evidence="2">
    <location>
        <begin position="239"/>
        <end position="259"/>
    </location>
</feature>
<feature type="transmembrane region" description="Helical" evidence="2">
    <location>
        <begin position="282"/>
        <end position="302"/>
    </location>
</feature>
<feature type="transmembrane region" description="Helical" evidence="2">
    <location>
        <begin position="319"/>
        <end position="339"/>
    </location>
</feature>
<feature type="transmembrane region" description="Helical" evidence="2">
    <location>
        <begin position="371"/>
        <end position="391"/>
    </location>
</feature>
<feature type="transmembrane region" description="Helical" evidence="2">
    <location>
        <begin position="395"/>
        <end position="415"/>
    </location>
</feature>
<feature type="transmembrane region" description="Helical" evidence="2">
    <location>
        <begin position="428"/>
        <end position="448"/>
    </location>
</feature>
<feature type="modified residue" description="Phosphoserine" evidence="8">
    <location>
        <position position="28"/>
    </location>
</feature>
<feature type="splice variant" id="VSP_031511" description="In isoform 2." evidence="5">
    <location>
        <begin position="345"/>
        <end position="462"/>
    </location>
</feature>
<feature type="sequence variant" id="VAR_039015" description="In dbSNP:rs7193572.">
    <original>L</original>
    <variation>P</variation>
    <location>
        <position position="46"/>
    </location>
</feature>
<feature type="sequence variant" id="VAR_039016" description="In dbSNP:rs7191331.">
    <original>T</original>
    <variation>I</variation>
    <location>
        <position position="78"/>
    </location>
</feature>
<feature type="sequence conflict" description="In Ref. 1; BAB14244." evidence="6" ref="1">
    <original>A</original>
    <variation>T</variation>
    <location>
        <position position="145"/>
    </location>
</feature>
<feature type="sequence conflict" description="In Ref. 3; BAD96652." evidence="6" ref="3">
    <original>V</original>
    <variation>A</variation>
    <location>
        <position position="208"/>
    </location>
</feature>
<accession>Q9NVC3</accession>
<accession>Q53GJ9</accession>
<accession>Q9H9I5</accession>
<evidence type="ECO:0000250" key="1">
    <source>
        <dbReference type="UniProtKB" id="Q8BWH0"/>
    </source>
</evidence>
<evidence type="ECO:0000255" key="2"/>
<evidence type="ECO:0000269" key="3">
    <source>
    </source>
</evidence>
<evidence type="ECO:0000269" key="4">
    <source>
    </source>
</evidence>
<evidence type="ECO:0000303" key="5">
    <source>
    </source>
</evidence>
<evidence type="ECO:0000305" key="6"/>
<evidence type="ECO:0000312" key="7">
    <source>
        <dbReference type="HGNC" id="HGNC:25582"/>
    </source>
</evidence>
<evidence type="ECO:0007744" key="8">
    <source>
    </source>
</evidence>